<proteinExistence type="evidence at protein level"/>
<keyword id="KW-0106">Calcium</keyword>
<keyword id="KW-0903">Direct protein sequencing</keyword>
<keyword id="KW-0449">Lipoprotein</keyword>
<keyword id="KW-0479">Metal-binding</keyword>
<keyword id="KW-0519">Myristate</keyword>
<keyword id="KW-1185">Reference proteome</keyword>
<keyword id="KW-0677">Repeat</keyword>
<feature type="initiator methionine" description="Removed">
    <location>
        <position position="1"/>
    </location>
</feature>
<feature type="chain" id="PRO_0000073762" description="Visinin-like protein 1">
    <location>
        <begin position="2"/>
        <end position="191"/>
    </location>
</feature>
<feature type="domain" description="EF-hand 1" evidence="2">
    <location>
        <begin position="40"/>
        <end position="58"/>
    </location>
</feature>
<feature type="domain" description="EF-hand 2" evidence="2">
    <location>
        <begin position="60"/>
        <end position="95"/>
    </location>
</feature>
<feature type="domain" description="EF-hand 3" evidence="2">
    <location>
        <begin position="96"/>
        <end position="131"/>
    </location>
</feature>
<feature type="domain" description="EF-hand 4" evidence="2">
    <location>
        <begin position="146"/>
        <end position="181"/>
    </location>
</feature>
<feature type="binding site" evidence="2">
    <location>
        <position position="73"/>
    </location>
    <ligand>
        <name>Ca(2+)</name>
        <dbReference type="ChEBI" id="CHEBI:29108"/>
        <label>1</label>
    </ligand>
</feature>
<feature type="binding site" evidence="2">
    <location>
        <position position="75"/>
    </location>
    <ligand>
        <name>Ca(2+)</name>
        <dbReference type="ChEBI" id="CHEBI:29108"/>
        <label>1</label>
    </ligand>
</feature>
<feature type="binding site" evidence="2">
    <location>
        <position position="77"/>
    </location>
    <ligand>
        <name>Ca(2+)</name>
        <dbReference type="ChEBI" id="CHEBI:29108"/>
        <label>1</label>
    </ligand>
</feature>
<feature type="binding site" evidence="2">
    <location>
        <position position="79"/>
    </location>
    <ligand>
        <name>Ca(2+)</name>
        <dbReference type="ChEBI" id="CHEBI:29108"/>
        <label>1</label>
    </ligand>
</feature>
<feature type="binding site" evidence="2">
    <location>
        <position position="84"/>
    </location>
    <ligand>
        <name>Ca(2+)</name>
        <dbReference type="ChEBI" id="CHEBI:29108"/>
        <label>1</label>
    </ligand>
</feature>
<feature type="binding site" evidence="2">
    <location>
        <position position="109"/>
    </location>
    <ligand>
        <name>Ca(2+)</name>
        <dbReference type="ChEBI" id="CHEBI:29108"/>
        <label>2</label>
    </ligand>
</feature>
<feature type="binding site" evidence="2">
    <location>
        <position position="111"/>
    </location>
    <ligand>
        <name>Ca(2+)</name>
        <dbReference type="ChEBI" id="CHEBI:29108"/>
        <label>2</label>
    </ligand>
</feature>
<feature type="binding site" evidence="2">
    <location>
        <position position="113"/>
    </location>
    <ligand>
        <name>Ca(2+)</name>
        <dbReference type="ChEBI" id="CHEBI:29108"/>
        <label>2</label>
    </ligand>
</feature>
<feature type="binding site" evidence="2">
    <location>
        <position position="115"/>
    </location>
    <ligand>
        <name>Ca(2+)</name>
        <dbReference type="ChEBI" id="CHEBI:29108"/>
        <label>2</label>
    </ligand>
</feature>
<feature type="binding site" evidence="2">
    <location>
        <position position="120"/>
    </location>
    <ligand>
        <name>Ca(2+)</name>
        <dbReference type="ChEBI" id="CHEBI:29108"/>
        <label>2</label>
    </ligand>
</feature>
<feature type="binding site" evidence="2">
    <location>
        <position position="159"/>
    </location>
    <ligand>
        <name>Ca(2+)</name>
        <dbReference type="ChEBI" id="CHEBI:29108"/>
        <label>3</label>
    </ligand>
</feature>
<feature type="binding site" evidence="2">
    <location>
        <position position="161"/>
    </location>
    <ligand>
        <name>Ca(2+)</name>
        <dbReference type="ChEBI" id="CHEBI:29108"/>
        <label>3</label>
    </ligand>
</feature>
<feature type="binding site" evidence="2">
    <location>
        <position position="163"/>
    </location>
    <ligand>
        <name>Ca(2+)</name>
        <dbReference type="ChEBI" id="CHEBI:29108"/>
        <label>3</label>
    </ligand>
</feature>
<feature type="binding site" evidence="2">
    <location>
        <position position="165"/>
    </location>
    <ligand>
        <name>Ca(2+)</name>
        <dbReference type="ChEBI" id="CHEBI:29108"/>
        <label>3</label>
    </ligand>
</feature>
<feature type="binding site" evidence="2">
    <location>
        <position position="170"/>
    </location>
    <ligand>
        <name>Ca(2+)</name>
        <dbReference type="ChEBI" id="CHEBI:29108"/>
        <label>3</label>
    </ligand>
</feature>
<feature type="lipid moiety-binding region" description="N-myristoyl glycine" evidence="1">
    <location>
        <position position="2"/>
    </location>
</feature>
<feature type="sequence conflict" description="In Ref. 3; AA sequence." evidence="3" ref="3">
    <original>H</original>
    <variation>A</variation>
    <location>
        <position position="25"/>
    </location>
</feature>
<feature type="sequence conflict" description="In Ref. 3; AA sequence." evidence="3" ref="3">
    <original>R</original>
    <variation>P</variation>
    <location>
        <position position="118"/>
    </location>
</feature>
<name>VISL1_BOVIN</name>
<comment type="function">
    <text>Regulates (in vitro) the inhibition of rhodopsin phosphorylation in a calcium-dependent manner.</text>
</comment>
<comment type="tissue specificity">
    <text>Brain and retina. Neuron-specific in the central and peripheral nervous system.</text>
</comment>
<comment type="miscellaneous">
    <text>Probably binds three calcium ions.</text>
</comment>
<comment type="similarity">
    <text evidence="3">Belongs to the recoverin family.</text>
</comment>
<dbReference type="EMBL" id="AB006006">
    <property type="protein sequence ID" value="BAA28716.1"/>
    <property type="molecule type" value="mRNA"/>
</dbReference>
<dbReference type="EMBL" id="BC103271">
    <property type="protein sequence ID" value="AAI03272.1"/>
    <property type="molecule type" value="mRNA"/>
</dbReference>
<dbReference type="RefSeq" id="NP_776915.1">
    <property type="nucleotide sequence ID" value="NM_174490.3"/>
</dbReference>
<dbReference type="SMR" id="P62763"/>
<dbReference type="FunCoup" id="P62763">
    <property type="interactions" value="182"/>
</dbReference>
<dbReference type="STRING" id="9913.ENSBTAP00000072671"/>
<dbReference type="PaxDb" id="9913-ENSBTAP00000022814"/>
<dbReference type="Ensembl" id="ENSBTAT00000022814.5">
    <property type="protein sequence ID" value="ENSBTAP00000022814.3"/>
    <property type="gene ID" value="ENSBTAG00000017158.5"/>
</dbReference>
<dbReference type="GeneID" id="282124"/>
<dbReference type="KEGG" id="bta:282124"/>
<dbReference type="CTD" id="7447"/>
<dbReference type="VEuPathDB" id="HostDB:ENSBTAG00000017158"/>
<dbReference type="VGNC" id="VGNC:36841">
    <property type="gene designation" value="VSNL1"/>
</dbReference>
<dbReference type="eggNOG" id="KOG0044">
    <property type="taxonomic scope" value="Eukaryota"/>
</dbReference>
<dbReference type="GeneTree" id="ENSGT00940000156513"/>
<dbReference type="HOGENOM" id="CLU_072366_1_0_1"/>
<dbReference type="InParanoid" id="P62763"/>
<dbReference type="OMA" id="HISRREM"/>
<dbReference type="OrthoDB" id="191686at2759"/>
<dbReference type="TreeFam" id="TF300009"/>
<dbReference type="Proteomes" id="UP000009136">
    <property type="component" value="Chromosome 11"/>
</dbReference>
<dbReference type="Bgee" id="ENSBTAG00000017158">
    <property type="expression patterns" value="Expressed in occipital lobe and 91 other cell types or tissues"/>
</dbReference>
<dbReference type="GO" id="GO:0005509">
    <property type="term" value="F:calcium ion binding"/>
    <property type="evidence" value="ECO:0000318"/>
    <property type="project" value="GO_Central"/>
</dbReference>
<dbReference type="GO" id="GO:0009966">
    <property type="term" value="P:regulation of signal transduction"/>
    <property type="evidence" value="ECO:0000318"/>
    <property type="project" value="GO_Central"/>
</dbReference>
<dbReference type="CDD" id="cd00051">
    <property type="entry name" value="EFh"/>
    <property type="match status" value="2"/>
</dbReference>
<dbReference type="FunFam" id="1.10.238.10:FF:000009">
    <property type="entry name" value="Visinin-like protein 1"/>
    <property type="match status" value="1"/>
</dbReference>
<dbReference type="Gene3D" id="1.10.238.10">
    <property type="entry name" value="EF-hand"/>
    <property type="match status" value="1"/>
</dbReference>
<dbReference type="InterPro" id="IPR011992">
    <property type="entry name" value="EF-hand-dom_pair"/>
</dbReference>
<dbReference type="InterPro" id="IPR018247">
    <property type="entry name" value="EF_Hand_1_Ca_BS"/>
</dbReference>
<dbReference type="InterPro" id="IPR002048">
    <property type="entry name" value="EF_hand_dom"/>
</dbReference>
<dbReference type="InterPro" id="IPR028846">
    <property type="entry name" value="Recoverin"/>
</dbReference>
<dbReference type="PANTHER" id="PTHR23055">
    <property type="entry name" value="CALCIUM BINDING PROTEINS"/>
    <property type="match status" value="1"/>
</dbReference>
<dbReference type="PANTHER" id="PTHR23055:SF101">
    <property type="entry name" value="VISININ-LIKE PROTEIN 1"/>
    <property type="match status" value="1"/>
</dbReference>
<dbReference type="Pfam" id="PF00036">
    <property type="entry name" value="EF-hand_1"/>
    <property type="match status" value="1"/>
</dbReference>
<dbReference type="Pfam" id="PF13499">
    <property type="entry name" value="EF-hand_7"/>
    <property type="match status" value="1"/>
</dbReference>
<dbReference type="PRINTS" id="PR00450">
    <property type="entry name" value="RECOVERIN"/>
</dbReference>
<dbReference type="SMART" id="SM00054">
    <property type="entry name" value="EFh"/>
    <property type="match status" value="3"/>
</dbReference>
<dbReference type="SUPFAM" id="SSF47473">
    <property type="entry name" value="EF-hand"/>
    <property type="match status" value="1"/>
</dbReference>
<dbReference type="PROSITE" id="PS00018">
    <property type="entry name" value="EF_HAND_1"/>
    <property type="match status" value="3"/>
</dbReference>
<dbReference type="PROSITE" id="PS50222">
    <property type="entry name" value="EF_HAND_2"/>
    <property type="match status" value="4"/>
</dbReference>
<organism>
    <name type="scientific">Bos taurus</name>
    <name type="common">Bovine</name>
    <dbReference type="NCBI Taxonomy" id="9913"/>
    <lineage>
        <taxon>Eukaryota</taxon>
        <taxon>Metazoa</taxon>
        <taxon>Chordata</taxon>
        <taxon>Craniata</taxon>
        <taxon>Vertebrata</taxon>
        <taxon>Euteleostomi</taxon>
        <taxon>Mammalia</taxon>
        <taxon>Eutheria</taxon>
        <taxon>Laurasiatheria</taxon>
        <taxon>Artiodactyla</taxon>
        <taxon>Ruminantia</taxon>
        <taxon>Pecora</taxon>
        <taxon>Bovidae</taxon>
        <taxon>Bovinae</taxon>
        <taxon>Bos</taxon>
    </lineage>
</organism>
<evidence type="ECO:0000250" key="1"/>
<evidence type="ECO:0000255" key="2">
    <source>
        <dbReference type="PROSITE-ProRule" id="PRU00448"/>
    </source>
</evidence>
<evidence type="ECO:0000305" key="3"/>
<protein>
    <recommendedName>
        <fullName>Visinin-like protein 1</fullName>
    </recommendedName>
    <alternativeName>
        <fullName>Neurocalcin-alpha</fullName>
    </alternativeName>
</protein>
<gene>
    <name type="primary">VSNL1</name>
</gene>
<reference key="1">
    <citation type="journal article" date="1998" name="Biochem. J.">
        <title>Cloning and expression of a cDNA encoding a new neurocalcin isoform (neurocalcin alpha) from bovine brain.</title>
        <authorList>
            <person name="Kato M."/>
            <person name="Watanabe Y."/>
            <person name="Iino S."/>
            <person name="Takaoka Y."/>
            <person name="Kobayashi S."/>
            <person name="Haga T."/>
            <person name="Hidaka H."/>
        </authorList>
    </citation>
    <scope>NUCLEOTIDE SEQUENCE [MRNA]</scope>
    <source>
        <tissue>Brain</tissue>
    </source>
</reference>
<reference key="2">
    <citation type="submission" date="2005-08" db="EMBL/GenBank/DDBJ databases">
        <authorList>
            <consortium name="NIH - Mammalian Gene Collection (MGC) project"/>
        </authorList>
    </citation>
    <scope>NUCLEOTIDE SEQUENCE [LARGE SCALE MRNA]</scope>
    <source>
        <strain>Hereford</strain>
        <tissue>Hypothalamus</tissue>
    </source>
</reference>
<reference key="3">
    <citation type="journal article" date="1992" name="J. Biol. Chem.">
        <title>Neurocalcin: a novel calcium-binding protein from bovine brain.</title>
        <authorList>
            <person name="Terasawa M."/>
            <person name="Nakano A."/>
            <person name="Kobayashi R."/>
            <person name="Hidaka H."/>
        </authorList>
    </citation>
    <scope>PROTEIN SEQUENCE OF 8-27 AND 100-130</scope>
    <source>
        <tissue>Brain</tissue>
    </source>
</reference>
<sequence>MGKQNSKLAPEVMEDLVKSTEFNEHELKQWYKGFLKDCPSGRLNLEEFQQLYVKFFPYGDASKFAQHAFRTFDKNGDGTIDFREFICALSITSRGSFEQKLNWAFNMYDLDGDGKITRVEMLEIIEAIYKMVGTVIMMKMNEDGLTPEQRVDKIFSKMDKNKDDQITLDEFKEAAKSDPSIVLLLQCDIQK</sequence>
<accession>P62763</accession>
<accession>P28677</accession>
<accession>P29103</accession>
<accession>P42323</accession>
<accession>Q3ZBI8</accession>
<accession>Q9UM20</accession>